<comment type="function">
    <text evidence="1">Anchors the catalytic subunits of asymmetric AChE to the synaptic basal lamina.</text>
</comment>
<comment type="subunit">
    <text evidence="1">Homotrimer. Component of the asymmetric form of AChE, a disulfide-bonded oligomer composed of the collagenic subunits (Q) and a variable number of asymmetric catalytic subunits (T). The N-terminal of a collagenic subunit (Q) associates with the C-terminal of a catalytic subunit (T) (By similarity).</text>
</comment>
<comment type="subcellular location">
    <subcellularLocation>
        <location evidence="1">Synapse</location>
    </subcellularLocation>
</comment>
<comment type="domain">
    <text evidence="1">The proline-rich attachment domain (PRAD) binds the AChE catalytic subunits.</text>
</comment>
<comment type="PTM">
    <text evidence="1">The triple-helical tail is stabilized by disulfide bonds at each end.</text>
</comment>
<comment type="similarity">
    <text evidence="4">Belongs to the COLQ family.</text>
</comment>
<reference key="1">
    <citation type="journal article" date="2004" name="Genome Res.">
        <title>The status, quality, and expansion of the NIH full-length cDNA project: the Mammalian Gene Collection (MGC).</title>
        <authorList>
            <consortium name="The MGC Project Team"/>
        </authorList>
    </citation>
    <scope>NUCLEOTIDE SEQUENCE [LARGE SCALE MRNA]</scope>
</reference>
<reference key="2">
    <citation type="journal article" date="1997" name="J. Biol. Chem.">
        <title>The mammalian gene of acetylcholinesterase-associated collagen.</title>
        <authorList>
            <person name="Krejci E."/>
            <person name="Thomine S."/>
            <person name="Boschetti N."/>
            <person name="Legay C."/>
            <person name="Sketelj J."/>
            <person name="Massoulie J."/>
        </authorList>
    </citation>
    <scope>NUCLEOTIDE SEQUENCE [GENOMIC DNA] OF 37-273</scope>
    <source>
        <strain>129/SvJ</strain>
    </source>
</reference>
<proteinExistence type="evidence at transcript level"/>
<keyword id="KW-0176">Collagen</keyword>
<keyword id="KW-1015">Disulfide bond</keyword>
<keyword id="KW-0531">Neurotransmitter degradation</keyword>
<keyword id="KW-1185">Reference proteome</keyword>
<keyword id="KW-0677">Repeat</keyword>
<keyword id="KW-0732">Signal</keyword>
<keyword id="KW-0770">Synapse</keyword>
<evidence type="ECO:0000250" key="1"/>
<evidence type="ECO:0000255" key="2"/>
<evidence type="ECO:0000256" key="3">
    <source>
        <dbReference type="SAM" id="MobiDB-lite"/>
    </source>
</evidence>
<evidence type="ECO:0000305" key="4"/>
<dbReference type="EMBL" id="BC107386">
    <property type="protein sequence ID" value="AAI07387.1"/>
    <property type="molecule type" value="mRNA"/>
</dbReference>
<dbReference type="EMBL" id="AH005576">
    <property type="protein sequence ID" value="AAB72195.1"/>
    <property type="molecule type" value="Genomic_DNA"/>
</dbReference>
<dbReference type="CCDS" id="CCDS36856.2"/>
<dbReference type="RefSeq" id="NP_034067.2">
    <property type="nucleotide sequence ID" value="NM_009937.3"/>
</dbReference>
<dbReference type="SMR" id="O35348"/>
<dbReference type="CORUM" id="O35348"/>
<dbReference type="FunCoup" id="O35348">
    <property type="interactions" value="15"/>
</dbReference>
<dbReference type="STRING" id="10090.ENSMUSP00000107658"/>
<dbReference type="PhosphoSitePlus" id="O35348"/>
<dbReference type="PaxDb" id="10090-ENSMUSP00000107658"/>
<dbReference type="ProteomicsDB" id="285245"/>
<dbReference type="Antibodypedia" id="11101">
    <property type="antibodies" value="152 antibodies from 24 providers"/>
</dbReference>
<dbReference type="Ensembl" id="ENSMUST00000112027.9">
    <property type="protein sequence ID" value="ENSMUSP00000107658.3"/>
    <property type="gene ID" value="ENSMUSG00000057606.15"/>
</dbReference>
<dbReference type="GeneID" id="382864"/>
<dbReference type="KEGG" id="mmu:382864"/>
<dbReference type="UCSC" id="uc007sxv.2">
    <property type="organism name" value="mouse"/>
</dbReference>
<dbReference type="AGR" id="MGI:1338761"/>
<dbReference type="CTD" id="8292"/>
<dbReference type="MGI" id="MGI:1338761">
    <property type="gene designation" value="Colq"/>
</dbReference>
<dbReference type="VEuPathDB" id="HostDB:ENSMUSG00000057606"/>
<dbReference type="eggNOG" id="KOG3544">
    <property type="taxonomic scope" value="Eukaryota"/>
</dbReference>
<dbReference type="GeneTree" id="ENSGT00940000157248"/>
<dbReference type="HOGENOM" id="CLU_650464_0_0_1"/>
<dbReference type="InParanoid" id="O35348"/>
<dbReference type="OMA" id="LCLPLWF"/>
<dbReference type="OrthoDB" id="291007at2759"/>
<dbReference type="PhylomeDB" id="O35348"/>
<dbReference type="TreeFam" id="TF331890"/>
<dbReference type="BioGRID-ORCS" id="382864">
    <property type="hits" value="0 hits in 78 CRISPR screens"/>
</dbReference>
<dbReference type="ChiTaRS" id="Colq">
    <property type="organism name" value="mouse"/>
</dbReference>
<dbReference type="PRO" id="PR:O35348"/>
<dbReference type="Proteomes" id="UP000000589">
    <property type="component" value="Chromosome 14"/>
</dbReference>
<dbReference type="RNAct" id="O35348">
    <property type="molecule type" value="protein"/>
</dbReference>
<dbReference type="Bgee" id="ENSMUSG00000057606">
    <property type="expression patterns" value="Expressed in thymus and 61 other cell types or tissues"/>
</dbReference>
<dbReference type="ExpressionAtlas" id="O35348">
    <property type="expression patterns" value="baseline and differential"/>
</dbReference>
<dbReference type="GO" id="GO:0005581">
    <property type="term" value="C:collagen trimer"/>
    <property type="evidence" value="ECO:0007669"/>
    <property type="project" value="UniProtKB-KW"/>
</dbReference>
<dbReference type="GO" id="GO:0062023">
    <property type="term" value="C:collagen-containing extracellular matrix"/>
    <property type="evidence" value="ECO:0007005"/>
    <property type="project" value="BHF-UCL"/>
</dbReference>
<dbReference type="GO" id="GO:0031594">
    <property type="term" value="C:neuromuscular junction"/>
    <property type="evidence" value="ECO:0000314"/>
    <property type="project" value="MGI"/>
</dbReference>
<dbReference type="GO" id="GO:0005886">
    <property type="term" value="C:plasma membrane"/>
    <property type="evidence" value="ECO:0007669"/>
    <property type="project" value="Ensembl"/>
</dbReference>
<dbReference type="GO" id="GO:0090150">
    <property type="term" value="P:establishment of protein localization to membrane"/>
    <property type="evidence" value="ECO:0000315"/>
    <property type="project" value="MGI"/>
</dbReference>
<dbReference type="GO" id="GO:0008582">
    <property type="term" value="P:regulation of synaptic assembly at neuromuscular junction"/>
    <property type="evidence" value="ECO:0000315"/>
    <property type="project" value="MGI"/>
</dbReference>
<dbReference type="GO" id="GO:0071340">
    <property type="term" value="P:skeletal muscle acetylcholine-gated channel clustering"/>
    <property type="evidence" value="ECO:0000314"/>
    <property type="project" value="MGI"/>
</dbReference>
<dbReference type="InterPro" id="IPR008160">
    <property type="entry name" value="Collagen"/>
</dbReference>
<dbReference type="InterPro" id="IPR050149">
    <property type="entry name" value="Collagen_superfamily"/>
</dbReference>
<dbReference type="InterPro" id="IPR011936">
    <property type="entry name" value="Myxo_disulph_rpt"/>
</dbReference>
<dbReference type="NCBIfam" id="TIGR02232">
    <property type="entry name" value="myxo_disulf_rpt"/>
    <property type="match status" value="1"/>
</dbReference>
<dbReference type="PANTHER" id="PTHR24023:SF861">
    <property type="entry name" value="ACETYLCHOLINESTERASE COLLAGENIC TAIL PEPTIDE"/>
    <property type="match status" value="1"/>
</dbReference>
<dbReference type="PANTHER" id="PTHR24023">
    <property type="entry name" value="COLLAGEN ALPHA"/>
    <property type="match status" value="1"/>
</dbReference>
<dbReference type="Pfam" id="PF01391">
    <property type="entry name" value="Collagen"/>
    <property type="match status" value="2"/>
</dbReference>
<organism>
    <name type="scientific">Mus musculus</name>
    <name type="common">Mouse</name>
    <dbReference type="NCBI Taxonomy" id="10090"/>
    <lineage>
        <taxon>Eukaryota</taxon>
        <taxon>Metazoa</taxon>
        <taxon>Chordata</taxon>
        <taxon>Craniata</taxon>
        <taxon>Vertebrata</taxon>
        <taxon>Euteleostomi</taxon>
        <taxon>Mammalia</taxon>
        <taxon>Eutheria</taxon>
        <taxon>Euarchontoglires</taxon>
        <taxon>Glires</taxon>
        <taxon>Rodentia</taxon>
        <taxon>Myomorpha</taxon>
        <taxon>Muroidea</taxon>
        <taxon>Muridae</taxon>
        <taxon>Murinae</taxon>
        <taxon>Mus</taxon>
        <taxon>Mus</taxon>
    </lineage>
</organism>
<protein>
    <recommendedName>
        <fullName>Acetylcholinesterase collagenic tail peptide</fullName>
    </recommendedName>
    <alternativeName>
        <fullName>AChE Q subunit</fullName>
    </alternativeName>
    <alternativeName>
        <fullName>Acetylcholinesterase-associated collagen</fullName>
    </alternativeName>
</protein>
<sequence length="457" mass="47684">MVVLNPMTLGIYLQLFFCSIVSQPTFINSVVPISAALPGLDQKKRGSHKACCLLMPPPPPLFPPPFFRGSRSPLLSPDMKNLLELEASPSPCIQGSLGSPGPPGPQGPPGLPGKTGPKGEKGDLGRPGRKGRPGPPGVPGMPGPVGWPGPEGPRGEKGDLGMMGLPGSRGPMGSKGFPGSRGEKGSRGERGDLGPKGEKGFPGFPGMLGQKGEMGPKGESGLAGHRGPTGRPGKRGKQGQKGDSGIMGPPGKPGPSGQPGRQGPPGPPGPPSAGQLVMGLKGERGFPGPPGRCLCGPPVNVNNPSYGDSMYGRGSPRVPAIFVVNNQEELERLNTQNAIAFRRDQRSLYFKDSLGWLPIQLTPFYPVGYTVKQPGTCGDGVLQPGEECDDGNPDVSDGCIDCHRAYCGDGYRHQGVEDCDGSDFGYLTCETYLPGSYGDLRCTQYCSIDSTPCRYFT</sequence>
<name>COLQ_MOUSE</name>
<gene>
    <name type="primary">Colq</name>
</gene>
<accession>O35348</accession>
<accession>Q08EK8</accession>
<feature type="signal peptide" evidence="2">
    <location>
        <begin position="1"/>
        <end position="29"/>
    </location>
</feature>
<feature type="chain" id="PRO_0000059415" description="Acetylcholinesterase collagenic tail peptide">
    <location>
        <begin position="30"/>
        <end position="457"/>
    </location>
</feature>
<feature type="domain" description="Collagen-like 1">
    <location>
        <begin position="95"/>
        <end position="154"/>
    </location>
</feature>
<feature type="domain" description="Collagen-like 2">
    <location>
        <begin position="158"/>
        <end position="271"/>
    </location>
</feature>
<feature type="region of interest" description="PRAD" evidence="1">
    <location>
        <begin position="51"/>
        <end position="67"/>
    </location>
</feature>
<feature type="region of interest" description="Disordered" evidence="3">
    <location>
        <begin position="89"/>
        <end position="289"/>
    </location>
</feature>
<feature type="region of interest" description="Heparan sulfate proteoglycan binding" evidence="2">
    <location>
        <begin position="129"/>
        <end position="132"/>
    </location>
</feature>
<feature type="region of interest" description="Heparan sulfate proteoglycan binding" evidence="2">
    <location>
        <begin position="234"/>
        <end position="237"/>
    </location>
</feature>
<feature type="compositionally biased region" description="Pro residues" evidence="3">
    <location>
        <begin position="100"/>
        <end position="111"/>
    </location>
</feature>
<feature type="compositionally biased region" description="Basic and acidic residues" evidence="3">
    <location>
        <begin position="117"/>
        <end position="126"/>
    </location>
</feature>
<feature type="compositionally biased region" description="Pro residues" evidence="3">
    <location>
        <begin position="133"/>
        <end position="151"/>
    </location>
</feature>
<feature type="compositionally biased region" description="Basic and acidic residues" evidence="3">
    <location>
        <begin position="181"/>
        <end position="199"/>
    </location>
</feature>
<feature type="compositionally biased region" description="Pro residues" evidence="3">
    <location>
        <begin position="262"/>
        <end position="271"/>
    </location>
</feature>
<feature type="disulfide bond" description="Interchain (with T subunit)" evidence="2">
    <location>
        <position position="51"/>
    </location>
</feature>
<feature type="disulfide bond" description="Interchain (with T subunit)" evidence="2">
    <location>
        <position position="52"/>
    </location>
</feature>
<feature type="disulfide bond" description="Interchain" evidence="2">
    <location>
        <position position="92"/>
    </location>
</feature>
<feature type="disulfide bond" description="Interchain" evidence="2">
    <location>
        <position position="293"/>
    </location>
</feature>
<feature type="disulfide bond" description="Interchain" evidence="2">
    <location>
        <position position="295"/>
    </location>
</feature>
<feature type="sequence conflict" description="In Ref. 2; AAB72195." evidence="4" ref="2">
    <location>
        <position position="105"/>
    </location>
</feature>
<feature type="sequence conflict" description="In Ref. 2; AAB72195." evidence="4" ref="2">
    <original>P</original>
    <variation>H</variation>
    <location>
        <position position="250"/>
    </location>
</feature>
<feature type="sequence conflict" description="In Ref. 2; AAB72195." evidence="4" ref="2">
    <original>P</original>
    <variation>A</variation>
    <location>
        <position position="267"/>
    </location>
</feature>